<accession>B0K9C5</accession>
<name>PROA_THEP3</name>
<sequence>MEVEVKAKQAKAAARRMAVLDENTKNLALNHMADALIKDIGKILEANKKDVVEAEKRNIKASLIDRLKLDEKRVEAMAKGLREISALPDPVGSIEKMWKRPNGLQIGKMRVPIGVIGIIYESRPNVTADAAGLCLKSGNAVILRGGSDAINSNIAISSILAKAAYETGIPEGAIQLIENTDREEVNRMMKLNGLIDLIIPRGGASLIKNVIENSTVPVIETGVGNCHIFVDETAKFNMAKDIIVNAKVQRPGVCNAVETVLVHKSIAKEFLPLMVEELTSLGVEIRGCQITKEICPQVKEATDKDWETEYLDLILAVKVVDGIEEALDHISKYSTGHSESIITENYENAMMFLKSVDSAAVYVNASTRFTDGGEFGFGAEIGISTQKMHARGPMGLEELTTYKYVILGSGQIRK</sequence>
<organism>
    <name type="scientific">Thermoanaerobacter pseudethanolicus (strain ATCC 33223 / 39E)</name>
    <name type="common">Clostridium thermohydrosulfuricum</name>
    <dbReference type="NCBI Taxonomy" id="340099"/>
    <lineage>
        <taxon>Bacteria</taxon>
        <taxon>Bacillati</taxon>
        <taxon>Bacillota</taxon>
        <taxon>Clostridia</taxon>
        <taxon>Thermoanaerobacterales</taxon>
        <taxon>Thermoanaerobacteraceae</taxon>
        <taxon>Thermoanaerobacter</taxon>
    </lineage>
</organism>
<proteinExistence type="inferred from homology"/>
<dbReference type="EC" id="1.2.1.41" evidence="1"/>
<dbReference type="EMBL" id="CP000924">
    <property type="protein sequence ID" value="ABY94738.1"/>
    <property type="molecule type" value="Genomic_DNA"/>
</dbReference>
<dbReference type="RefSeq" id="WP_012269305.1">
    <property type="nucleotide sequence ID" value="NC_010321.1"/>
</dbReference>
<dbReference type="SMR" id="B0K9C5"/>
<dbReference type="STRING" id="340099.Teth39_1083"/>
<dbReference type="KEGG" id="tpd:Teth39_1083"/>
<dbReference type="eggNOG" id="COG0014">
    <property type="taxonomic scope" value="Bacteria"/>
</dbReference>
<dbReference type="HOGENOM" id="CLU_030231_0_0_9"/>
<dbReference type="UniPathway" id="UPA00098">
    <property type="reaction ID" value="UER00360"/>
</dbReference>
<dbReference type="Proteomes" id="UP000002156">
    <property type="component" value="Chromosome"/>
</dbReference>
<dbReference type="GO" id="GO:0005737">
    <property type="term" value="C:cytoplasm"/>
    <property type="evidence" value="ECO:0007669"/>
    <property type="project" value="UniProtKB-SubCell"/>
</dbReference>
<dbReference type="GO" id="GO:0004350">
    <property type="term" value="F:glutamate-5-semialdehyde dehydrogenase activity"/>
    <property type="evidence" value="ECO:0007669"/>
    <property type="project" value="UniProtKB-UniRule"/>
</dbReference>
<dbReference type="GO" id="GO:0050661">
    <property type="term" value="F:NADP binding"/>
    <property type="evidence" value="ECO:0007669"/>
    <property type="project" value="InterPro"/>
</dbReference>
<dbReference type="GO" id="GO:0055129">
    <property type="term" value="P:L-proline biosynthetic process"/>
    <property type="evidence" value="ECO:0007669"/>
    <property type="project" value="UniProtKB-UniRule"/>
</dbReference>
<dbReference type="CDD" id="cd07079">
    <property type="entry name" value="ALDH_F18-19_ProA-GPR"/>
    <property type="match status" value="1"/>
</dbReference>
<dbReference type="FunFam" id="3.40.309.10:FF:000006">
    <property type="entry name" value="Gamma-glutamyl phosphate reductase"/>
    <property type="match status" value="1"/>
</dbReference>
<dbReference type="Gene3D" id="3.40.605.10">
    <property type="entry name" value="Aldehyde Dehydrogenase, Chain A, domain 1"/>
    <property type="match status" value="1"/>
</dbReference>
<dbReference type="Gene3D" id="3.40.309.10">
    <property type="entry name" value="Aldehyde Dehydrogenase, Chain A, domain 2"/>
    <property type="match status" value="1"/>
</dbReference>
<dbReference type="HAMAP" id="MF_00412">
    <property type="entry name" value="ProA"/>
    <property type="match status" value="1"/>
</dbReference>
<dbReference type="InterPro" id="IPR016161">
    <property type="entry name" value="Ald_DH/histidinol_DH"/>
</dbReference>
<dbReference type="InterPro" id="IPR016163">
    <property type="entry name" value="Ald_DH_C"/>
</dbReference>
<dbReference type="InterPro" id="IPR016162">
    <property type="entry name" value="Ald_DH_N"/>
</dbReference>
<dbReference type="InterPro" id="IPR015590">
    <property type="entry name" value="Aldehyde_DH_dom"/>
</dbReference>
<dbReference type="InterPro" id="IPR020593">
    <property type="entry name" value="G-glutamylP_reductase_CS"/>
</dbReference>
<dbReference type="InterPro" id="IPR012134">
    <property type="entry name" value="Glu-5-SA_DH"/>
</dbReference>
<dbReference type="InterPro" id="IPR000965">
    <property type="entry name" value="GPR_dom"/>
</dbReference>
<dbReference type="NCBIfam" id="NF001221">
    <property type="entry name" value="PRK00197.1"/>
    <property type="match status" value="1"/>
</dbReference>
<dbReference type="NCBIfam" id="TIGR00407">
    <property type="entry name" value="proA"/>
    <property type="match status" value="1"/>
</dbReference>
<dbReference type="PANTHER" id="PTHR11063:SF8">
    <property type="entry name" value="DELTA-1-PYRROLINE-5-CARBOXYLATE SYNTHASE"/>
    <property type="match status" value="1"/>
</dbReference>
<dbReference type="PANTHER" id="PTHR11063">
    <property type="entry name" value="GLUTAMATE SEMIALDEHYDE DEHYDROGENASE"/>
    <property type="match status" value="1"/>
</dbReference>
<dbReference type="Pfam" id="PF00171">
    <property type="entry name" value="Aldedh"/>
    <property type="match status" value="1"/>
</dbReference>
<dbReference type="PIRSF" id="PIRSF000151">
    <property type="entry name" value="GPR"/>
    <property type="match status" value="1"/>
</dbReference>
<dbReference type="SUPFAM" id="SSF53720">
    <property type="entry name" value="ALDH-like"/>
    <property type="match status" value="1"/>
</dbReference>
<dbReference type="PROSITE" id="PS01223">
    <property type="entry name" value="PROA"/>
    <property type="match status" value="1"/>
</dbReference>
<evidence type="ECO:0000255" key="1">
    <source>
        <dbReference type="HAMAP-Rule" id="MF_00412"/>
    </source>
</evidence>
<keyword id="KW-0028">Amino-acid biosynthesis</keyword>
<keyword id="KW-0963">Cytoplasm</keyword>
<keyword id="KW-0521">NADP</keyword>
<keyword id="KW-0560">Oxidoreductase</keyword>
<keyword id="KW-0641">Proline biosynthesis</keyword>
<keyword id="KW-1185">Reference proteome</keyword>
<gene>
    <name evidence="1" type="primary">proA</name>
    <name type="ordered locus">Teth39_1083</name>
</gene>
<protein>
    <recommendedName>
        <fullName evidence="1">Gamma-glutamyl phosphate reductase</fullName>
        <shortName evidence="1">GPR</shortName>
        <ecNumber evidence="1">1.2.1.41</ecNumber>
    </recommendedName>
    <alternativeName>
        <fullName evidence="1">Glutamate-5-semialdehyde dehydrogenase</fullName>
    </alternativeName>
    <alternativeName>
        <fullName evidence="1">Glutamyl-gamma-semialdehyde dehydrogenase</fullName>
        <shortName evidence="1">GSA dehydrogenase</shortName>
    </alternativeName>
</protein>
<feature type="chain" id="PRO_1000193668" description="Gamma-glutamyl phosphate reductase">
    <location>
        <begin position="1"/>
        <end position="414"/>
    </location>
</feature>
<comment type="function">
    <text evidence="1">Catalyzes the NADPH-dependent reduction of L-glutamate 5-phosphate into L-glutamate 5-semialdehyde and phosphate. The product spontaneously undergoes cyclization to form 1-pyrroline-5-carboxylate.</text>
</comment>
<comment type="catalytic activity">
    <reaction evidence="1">
        <text>L-glutamate 5-semialdehyde + phosphate + NADP(+) = L-glutamyl 5-phosphate + NADPH + H(+)</text>
        <dbReference type="Rhea" id="RHEA:19541"/>
        <dbReference type="ChEBI" id="CHEBI:15378"/>
        <dbReference type="ChEBI" id="CHEBI:43474"/>
        <dbReference type="ChEBI" id="CHEBI:57783"/>
        <dbReference type="ChEBI" id="CHEBI:58066"/>
        <dbReference type="ChEBI" id="CHEBI:58274"/>
        <dbReference type="ChEBI" id="CHEBI:58349"/>
        <dbReference type="EC" id="1.2.1.41"/>
    </reaction>
</comment>
<comment type="pathway">
    <text evidence="1">Amino-acid biosynthesis; L-proline biosynthesis; L-glutamate 5-semialdehyde from L-glutamate: step 2/2.</text>
</comment>
<comment type="subcellular location">
    <subcellularLocation>
        <location evidence="1">Cytoplasm</location>
    </subcellularLocation>
</comment>
<comment type="similarity">
    <text evidence="1">Belongs to the gamma-glutamyl phosphate reductase family.</text>
</comment>
<reference key="1">
    <citation type="submission" date="2008-01" db="EMBL/GenBank/DDBJ databases">
        <title>Complete sequence of Thermoanaerobacter pseudethanolicus 39E.</title>
        <authorList>
            <person name="Copeland A."/>
            <person name="Lucas S."/>
            <person name="Lapidus A."/>
            <person name="Barry K."/>
            <person name="Glavina del Rio T."/>
            <person name="Dalin E."/>
            <person name="Tice H."/>
            <person name="Pitluck S."/>
            <person name="Bruce D."/>
            <person name="Goodwin L."/>
            <person name="Saunders E."/>
            <person name="Brettin T."/>
            <person name="Detter J.C."/>
            <person name="Han C."/>
            <person name="Schmutz J."/>
            <person name="Larimer F."/>
            <person name="Land M."/>
            <person name="Hauser L."/>
            <person name="Kyrpides N."/>
            <person name="Lykidis A."/>
            <person name="Hemme C."/>
            <person name="Fields M.W."/>
            <person name="He Z."/>
            <person name="Zhou J."/>
            <person name="Richardson P."/>
        </authorList>
    </citation>
    <scope>NUCLEOTIDE SEQUENCE [LARGE SCALE GENOMIC DNA]</scope>
    <source>
        <strain>ATCC 33223 / DSM 2355 / 39E</strain>
    </source>
</reference>